<gene>
    <name evidence="1" type="primary">thrB</name>
    <name type="ordered locus">NIS_0420</name>
</gene>
<sequence length="293" mass="32470">MIISVPATSANLGPGFDTLGLALDLRNIVKIKKSRFFSISIKGEGANNVRLKGNNLFISIFNEHYRKLVGKTDKFRFTFINKIPLSRGLGSSSAVIVSAIAAAYAMAGVAIPREKLLNLALIYEPHPDNITPAVMGGFNVAVVENNKVYSLKKEIPQSLKAVVVIPNRPISTAHSRTRLPKRFAMSDVVYNVSRSSLLTAAFFSENWEMLRVASMDKLHQDIRMRGLPELFELQKLALQKGALMSTLSGSGSTFFNLCYESKAKELAKVLKDRFAKYQVKILDFDNKGLIIEE</sequence>
<reference key="1">
    <citation type="journal article" date="2007" name="Proc. Natl. Acad. Sci. U.S.A.">
        <title>Deep-sea vent epsilon-proteobacterial genomes provide insights into emergence of pathogens.</title>
        <authorList>
            <person name="Nakagawa S."/>
            <person name="Takaki Y."/>
            <person name="Shimamura S."/>
            <person name="Reysenbach A.-L."/>
            <person name="Takai K."/>
            <person name="Horikoshi K."/>
        </authorList>
    </citation>
    <scope>NUCLEOTIDE SEQUENCE [LARGE SCALE GENOMIC DNA]</scope>
    <source>
        <strain>SB155-2</strain>
    </source>
</reference>
<name>KHSE_NITSB</name>
<proteinExistence type="inferred from homology"/>
<keyword id="KW-0028">Amino-acid biosynthesis</keyword>
<keyword id="KW-0067">ATP-binding</keyword>
<keyword id="KW-0963">Cytoplasm</keyword>
<keyword id="KW-0418">Kinase</keyword>
<keyword id="KW-0547">Nucleotide-binding</keyword>
<keyword id="KW-1185">Reference proteome</keyword>
<keyword id="KW-0791">Threonine biosynthesis</keyword>
<keyword id="KW-0808">Transferase</keyword>
<feature type="chain" id="PRO_1000049154" description="Homoserine kinase">
    <location>
        <begin position="1"/>
        <end position="293"/>
    </location>
</feature>
<feature type="binding site" evidence="1">
    <location>
        <begin position="84"/>
        <end position="94"/>
    </location>
    <ligand>
        <name>ATP</name>
        <dbReference type="ChEBI" id="CHEBI:30616"/>
    </ligand>
</feature>
<comment type="function">
    <text evidence="1">Catalyzes the ATP-dependent phosphorylation of L-homoserine to L-homoserine phosphate.</text>
</comment>
<comment type="catalytic activity">
    <reaction evidence="1">
        <text>L-homoserine + ATP = O-phospho-L-homoserine + ADP + H(+)</text>
        <dbReference type="Rhea" id="RHEA:13985"/>
        <dbReference type="ChEBI" id="CHEBI:15378"/>
        <dbReference type="ChEBI" id="CHEBI:30616"/>
        <dbReference type="ChEBI" id="CHEBI:57476"/>
        <dbReference type="ChEBI" id="CHEBI:57590"/>
        <dbReference type="ChEBI" id="CHEBI:456216"/>
        <dbReference type="EC" id="2.7.1.39"/>
    </reaction>
</comment>
<comment type="pathway">
    <text evidence="1">Amino-acid biosynthesis; L-threonine biosynthesis; L-threonine from L-aspartate: step 4/5.</text>
</comment>
<comment type="subcellular location">
    <subcellularLocation>
        <location evidence="1">Cytoplasm</location>
    </subcellularLocation>
</comment>
<comment type="similarity">
    <text evidence="1">Belongs to the GHMP kinase family. Homoserine kinase subfamily.</text>
</comment>
<organism>
    <name type="scientific">Nitratiruptor sp. (strain SB155-2)</name>
    <dbReference type="NCBI Taxonomy" id="387092"/>
    <lineage>
        <taxon>Bacteria</taxon>
        <taxon>Pseudomonadati</taxon>
        <taxon>Campylobacterota</taxon>
        <taxon>Epsilonproteobacteria</taxon>
        <taxon>Nautiliales</taxon>
        <taxon>Nitratiruptoraceae</taxon>
        <taxon>Nitratiruptor</taxon>
    </lineage>
</organism>
<evidence type="ECO:0000255" key="1">
    <source>
        <dbReference type="HAMAP-Rule" id="MF_00384"/>
    </source>
</evidence>
<accession>A6Q225</accession>
<dbReference type="EC" id="2.7.1.39" evidence="1"/>
<dbReference type="EMBL" id="AP009178">
    <property type="protein sequence ID" value="BAF69534.1"/>
    <property type="molecule type" value="Genomic_DNA"/>
</dbReference>
<dbReference type="RefSeq" id="WP_012081797.1">
    <property type="nucleotide sequence ID" value="NC_009662.1"/>
</dbReference>
<dbReference type="SMR" id="A6Q225"/>
<dbReference type="FunCoup" id="A6Q225">
    <property type="interactions" value="349"/>
</dbReference>
<dbReference type="STRING" id="387092.NIS_0420"/>
<dbReference type="KEGG" id="nis:NIS_0420"/>
<dbReference type="eggNOG" id="COG0083">
    <property type="taxonomic scope" value="Bacteria"/>
</dbReference>
<dbReference type="HOGENOM" id="CLU_041243_0_0_7"/>
<dbReference type="InParanoid" id="A6Q225"/>
<dbReference type="OrthoDB" id="9769912at2"/>
<dbReference type="UniPathway" id="UPA00050">
    <property type="reaction ID" value="UER00064"/>
</dbReference>
<dbReference type="Proteomes" id="UP000001118">
    <property type="component" value="Chromosome"/>
</dbReference>
<dbReference type="GO" id="GO:0005737">
    <property type="term" value="C:cytoplasm"/>
    <property type="evidence" value="ECO:0007669"/>
    <property type="project" value="UniProtKB-SubCell"/>
</dbReference>
<dbReference type="GO" id="GO:0005524">
    <property type="term" value="F:ATP binding"/>
    <property type="evidence" value="ECO:0007669"/>
    <property type="project" value="UniProtKB-UniRule"/>
</dbReference>
<dbReference type="GO" id="GO:0004413">
    <property type="term" value="F:homoserine kinase activity"/>
    <property type="evidence" value="ECO:0007669"/>
    <property type="project" value="UniProtKB-UniRule"/>
</dbReference>
<dbReference type="GO" id="GO:0009088">
    <property type="term" value="P:threonine biosynthetic process"/>
    <property type="evidence" value="ECO:0007669"/>
    <property type="project" value="UniProtKB-UniRule"/>
</dbReference>
<dbReference type="Gene3D" id="3.30.230.10">
    <property type="match status" value="1"/>
</dbReference>
<dbReference type="Gene3D" id="3.30.70.890">
    <property type="entry name" value="GHMP kinase, C-terminal domain"/>
    <property type="match status" value="1"/>
</dbReference>
<dbReference type="HAMAP" id="MF_00384">
    <property type="entry name" value="Homoser_kinase"/>
    <property type="match status" value="1"/>
</dbReference>
<dbReference type="InterPro" id="IPR013750">
    <property type="entry name" value="GHMP_kinase_C_dom"/>
</dbReference>
<dbReference type="InterPro" id="IPR036554">
    <property type="entry name" value="GHMP_kinase_C_sf"/>
</dbReference>
<dbReference type="InterPro" id="IPR006204">
    <property type="entry name" value="GHMP_kinase_N_dom"/>
</dbReference>
<dbReference type="InterPro" id="IPR006203">
    <property type="entry name" value="GHMP_knse_ATP-bd_CS"/>
</dbReference>
<dbReference type="InterPro" id="IPR000870">
    <property type="entry name" value="Homoserine_kinase"/>
</dbReference>
<dbReference type="InterPro" id="IPR020568">
    <property type="entry name" value="Ribosomal_Su5_D2-typ_SF"/>
</dbReference>
<dbReference type="InterPro" id="IPR014721">
    <property type="entry name" value="Ribsml_uS5_D2-typ_fold_subgr"/>
</dbReference>
<dbReference type="NCBIfam" id="TIGR00191">
    <property type="entry name" value="thrB"/>
    <property type="match status" value="1"/>
</dbReference>
<dbReference type="PANTHER" id="PTHR20861:SF1">
    <property type="entry name" value="HOMOSERINE KINASE"/>
    <property type="match status" value="1"/>
</dbReference>
<dbReference type="PANTHER" id="PTHR20861">
    <property type="entry name" value="HOMOSERINE/4-DIPHOSPHOCYTIDYL-2-C-METHYL-D-ERYTHRITOL KINASE"/>
    <property type="match status" value="1"/>
</dbReference>
<dbReference type="Pfam" id="PF08544">
    <property type="entry name" value="GHMP_kinases_C"/>
    <property type="match status" value="1"/>
</dbReference>
<dbReference type="Pfam" id="PF00288">
    <property type="entry name" value="GHMP_kinases_N"/>
    <property type="match status" value="1"/>
</dbReference>
<dbReference type="PIRSF" id="PIRSF000676">
    <property type="entry name" value="Homoser_kin"/>
    <property type="match status" value="1"/>
</dbReference>
<dbReference type="PRINTS" id="PR00958">
    <property type="entry name" value="HOMSERKINASE"/>
</dbReference>
<dbReference type="SUPFAM" id="SSF55060">
    <property type="entry name" value="GHMP Kinase, C-terminal domain"/>
    <property type="match status" value="1"/>
</dbReference>
<dbReference type="SUPFAM" id="SSF54211">
    <property type="entry name" value="Ribosomal protein S5 domain 2-like"/>
    <property type="match status" value="1"/>
</dbReference>
<dbReference type="PROSITE" id="PS00627">
    <property type="entry name" value="GHMP_KINASES_ATP"/>
    <property type="match status" value="1"/>
</dbReference>
<protein>
    <recommendedName>
        <fullName evidence="1">Homoserine kinase</fullName>
        <shortName evidence="1">HK</shortName>
        <shortName evidence="1">HSK</shortName>
        <ecNumber evidence="1">2.7.1.39</ecNumber>
    </recommendedName>
</protein>